<name>PG166_VARV</name>
<feature type="chain" id="PRO_0000448165" description="Protein OPG166">
    <location>
        <begin position="1"/>
        <end position="277"/>
    </location>
</feature>
<feature type="transmembrane region" description="Helical" evidence="2">
    <location>
        <begin position="124"/>
        <end position="144"/>
    </location>
</feature>
<feature type="transmembrane region" description="Helical" evidence="2">
    <location>
        <begin position="156"/>
        <end position="176"/>
    </location>
</feature>
<feature type="transmembrane region" description="Helical" evidence="2">
    <location>
        <begin position="186"/>
        <end position="206"/>
    </location>
</feature>
<feature type="transmembrane region" description="Helical" evidence="2">
    <location>
        <begin position="219"/>
        <end position="239"/>
    </location>
</feature>
<feature type="transmembrane region" description="Helical" evidence="2">
    <location>
        <begin position="247"/>
        <end position="267"/>
    </location>
</feature>
<feature type="glycosylation site" description="N-linked (GlcNAc...) asparagine; by host" evidence="2">
    <location>
        <position position="29"/>
    </location>
</feature>
<feature type="glycosylation site" description="N-linked (GlcNAc...) asparagine; by host" evidence="2">
    <location>
        <position position="58"/>
    </location>
</feature>
<organismHost>
    <name type="scientific">Homo sapiens</name>
    <name type="common">Human</name>
    <dbReference type="NCBI Taxonomy" id="9606"/>
</organismHost>
<dbReference type="EMBL" id="L22579">
    <property type="protein sequence ID" value="AAA60893.1"/>
    <property type="molecule type" value="Genomic_DNA"/>
</dbReference>
<dbReference type="PIR" id="A72169">
    <property type="entry name" value="A72169"/>
</dbReference>
<dbReference type="PIR" id="T28583">
    <property type="entry name" value="T28583"/>
</dbReference>
<dbReference type="RefSeq" id="NP_042191.1">
    <property type="nucleotide sequence ID" value="NC_001611.1"/>
</dbReference>
<dbReference type="SMR" id="P0DST6"/>
<dbReference type="GeneID" id="1486522"/>
<dbReference type="KEGG" id="vg:1486522"/>
<dbReference type="Proteomes" id="UP000119805">
    <property type="component" value="Segment"/>
</dbReference>
<dbReference type="GO" id="GO:0070062">
    <property type="term" value="C:extracellular exosome"/>
    <property type="evidence" value="ECO:0007669"/>
    <property type="project" value="TreeGrafter"/>
</dbReference>
<dbReference type="GO" id="GO:0033644">
    <property type="term" value="C:host cell membrane"/>
    <property type="evidence" value="ECO:0007669"/>
    <property type="project" value="UniProtKB-SubCell"/>
</dbReference>
<dbReference type="GO" id="GO:0005886">
    <property type="term" value="C:plasma membrane"/>
    <property type="evidence" value="ECO:0007669"/>
    <property type="project" value="InterPro"/>
</dbReference>
<dbReference type="GO" id="GO:0070053">
    <property type="term" value="F:thrombospondin receptor activity"/>
    <property type="evidence" value="ECO:0007669"/>
    <property type="project" value="InterPro"/>
</dbReference>
<dbReference type="GO" id="GO:0022409">
    <property type="term" value="P:positive regulation of cell-cell adhesion"/>
    <property type="evidence" value="ECO:0007669"/>
    <property type="project" value="InterPro"/>
</dbReference>
<dbReference type="GO" id="GO:0050729">
    <property type="term" value="P:positive regulation of inflammatory response"/>
    <property type="evidence" value="ECO:0007669"/>
    <property type="project" value="InterPro"/>
</dbReference>
<dbReference type="GO" id="GO:0050766">
    <property type="term" value="P:positive regulation of phagocytosis"/>
    <property type="evidence" value="ECO:0007669"/>
    <property type="project" value="InterPro"/>
</dbReference>
<dbReference type="Gene3D" id="2.60.40.10">
    <property type="entry name" value="Immunoglobulins"/>
    <property type="match status" value="1"/>
</dbReference>
<dbReference type="InterPro" id="IPR006704">
    <property type="entry name" value="CD47"/>
</dbReference>
<dbReference type="InterPro" id="IPR013147">
    <property type="entry name" value="CD47-like_TM"/>
</dbReference>
<dbReference type="InterPro" id="IPR013270">
    <property type="entry name" value="CD47_Vset"/>
</dbReference>
<dbReference type="InterPro" id="IPR013783">
    <property type="entry name" value="Ig-like_fold"/>
</dbReference>
<dbReference type="PANTHER" id="PTHR10613">
    <property type="entry name" value="LEUKOCYTE SURFACE ANTIGEN CD47"/>
    <property type="match status" value="1"/>
</dbReference>
<dbReference type="PANTHER" id="PTHR10613:SF0">
    <property type="entry name" value="LEUKOCYTE SURFACE ANTIGEN CD47"/>
    <property type="match status" value="1"/>
</dbReference>
<dbReference type="Pfam" id="PF04549">
    <property type="entry name" value="CD47"/>
    <property type="match status" value="1"/>
</dbReference>
<dbReference type="Pfam" id="PF08204">
    <property type="entry name" value="V-set_CD47"/>
    <property type="match status" value="1"/>
</dbReference>
<organism>
    <name type="scientific">Variola virus</name>
    <dbReference type="NCBI Taxonomy" id="10255"/>
    <lineage>
        <taxon>Viruses</taxon>
        <taxon>Varidnaviria</taxon>
        <taxon>Bamfordvirae</taxon>
        <taxon>Nucleocytoviricota</taxon>
        <taxon>Pokkesviricetes</taxon>
        <taxon>Chitovirales</taxon>
        <taxon>Poxviridae</taxon>
        <taxon>Chordopoxvirinae</taxon>
        <taxon>Orthopoxvirus</taxon>
    </lineage>
</organism>
<gene>
    <name type="primary">OPG166</name>
    <name type="ORF">A38L</name>
    <name type="ORF">A41L</name>
</gene>
<proteinExistence type="inferred from homology"/>
<keyword id="KW-0325">Glycoprotein</keyword>
<keyword id="KW-1043">Host membrane</keyword>
<keyword id="KW-0472">Membrane</keyword>
<keyword id="KW-0812">Transmembrane</keyword>
<keyword id="KW-1133">Transmembrane helix</keyword>
<sequence length="277" mass="31595">MLRVRILLIYLCTFVVITSTKTIEYTACNDTIIIPCTIDNPTKYIRWKLDNHNILTYNKTSKTIILSKWHTSAKLHSLSDNDVSLIIKYKDILPGTYTCEDNTGIKSTVKLVQRHTNWFNDHHTMLMFIFTGITLFLLFLEIAYTSISVVFSTNLGILQVFGCIIAMIELCGAFLFYPSMFTLRHIIGLLMMTLPSIFLIITKVFSFWLLCKLSCAVHLIIYYQLAGYILTVLGLGLSLKECVDGTLLLSGLGTIMVSEHFSLLFLVCFPSTQRDYY</sequence>
<protein>
    <recommendedName>
        <fullName>Protein OPG166</fullName>
    </recommendedName>
</protein>
<evidence type="ECO:0000250" key="1">
    <source>
        <dbReference type="UniProtKB" id="P24763"/>
    </source>
</evidence>
<evidence type="ECO:0000255" key="2"/>
<evidence type="ECO:0000305" key="3"/>
<reference key="1">
    <citation type="journal article" date="1992" name="J. Gen. Virol.">
        <title>Nucleotide sequence of 21.8 kbp of variola major virus strain Harvey and comparison with vaccinia virus.</title>
        <authorList>
            <person name="Aguado B."/>
            <person name="Selmes I.P."/>
            <person name="Smith G.L."/>
        </authorList>
    </citation>
    <scope>NUCLEOTIDE SEQUENCE [GENOMIC DNA]</scope>
    <source>
        <strain>Harvey</strain>
    </source>
</reference>
<reference key="2">
    <citation type="journal article" date="1993" name="Nature">
        <title>Potential virulence determinants in terminal regions of variola smallpox virus genome.</title>
        <authorList>
            <person name="Massung R.F."/>
            <person name="Esposito J.J."/>
            <person name="Liu L.I."/>
            <person name="Qi J."/>
            <person name="Utterback T.R."/>
            <person name="Knight J.C."/>
            <person name="Aubin L."/>
            <person name="Yuran T.E."/>
            <person name="Parsons J.M."/>
            <person name="Loparev V.N."/>
            <person name="Selivanov N.A."/>
            <person name="Cavallaro K.F."/>
            <person name="Kerlavage A.R."/>
            <person name="Mahy B.W.J."/>
            <person name="Venter J.C."/>
        </authorList>
    </citation>
    <scope>NUCLEOTIDE SEQUENCE [GENOMIC DNA]</scope>
    <source>
        <strain>Bangladesh-1975</strain>
    </source>
</reference>
<comment type="function">
    <text evidence="1">Promotes, when overexpressed, the influx of extracellular Ca(2+), leading to membrane permeability and host cell necrosis.</text>
</comment>
<comment type="subcellular location">
    <subcellularLocation>
        <location evidence="1">Host membrane</location>
        <topology evidence="1">Multi-pass membrane protein</topology>
    </subcellularLocation>
</comment>
<comment type="similarity">
    <text evidence="3">Belongs to the orthopoxvirus OPG166 protein family.</text>
</comment>
<accession>P0DST6</accession>
<accession>P33853</accession>